<sequence length="888" mass="100044">MSQGILSPPAGLLSDEEVVVSPMFESTAADLGSVIRKDLLSDCSVISTSLEDKQVPSEDGTEKVKVYLRVRPLLPSELERQEDQGCVCIENMETLALQAPKDSFAQKSNERGIGQATHRFTFSQIFGPEVGQASFFNLTVKEMVKDVLKGQNWLIYTYGVTNSGKTYTIQGTIKDGGILPRSLALIFNSLQGQLHPTPNLKPLFSNEVMWLDSKQIRQEELKKLALLNGGLQEEELSTSLKKSVYIDSRMGTSTSFDSGIAGLSSSSQFPSSSQLDEMSHRWAQPDTVPVSVPADLRFSIWISFFEIYNELLYDLLEPPSQQRKRQTLRLCEDQNGNPYVKDLNWIHVQDAEEAWKLLKVGRKNQSFASTHLNQNSSRSHSIFSIRILHLQGEGDIIPKISELSLCDLAGSERCKDQKSGERLKEAGNINTSLHTLGRCIAALRQNQQNRSKQNLVPFRDSKLTRVFQGFFTGRGRSCMIVNVNPCASTYDETLHVAKFSAIASQLVHAPPVQLGFPSIHSFLKEHSLRASPSLETGAKTDPGLGDDIENEVDISTYGKEELLQVVEAMKALLLKERQEKLRLEVQLRDEICNEMVEQMQQREQWCSEHLDTQKELLEELYEDKLTILKESLTSFYQEELQERDEKIKELEALLQEARQQQVAHQPSGSELSLRRSQRLTSVSTQQFHEIKAKLEQCKAELNSTTEELQKYQKMLEPPPSAKPFIVDVDKKLEEGQKNIRLLRTELQKLGESLQSAERACCHNTGAGKLRQALATCDDILIKQDQTLAELQNNMTLVKLDLRKKAACIAEQYHTVLKLQGQASTKKRLGANQENQQPNQQPPGKKPFLRNLLPRTPTCQSSTDCSPYARILRSRRSPLLKSGPFGKKY</sequence>
<name>KI20A_BOVIN</name>
<keyword id="KW-0007">Acetylation</keyword>
<keyword id="KW-0067">ATP-binding</keyword>
<keyword id="KW-0175">Coiled coil</keyword>
<keyword id="KW-0963">Cytoplasm</keyword>
<keyword id="KW-0206">Cytoskeleton</keyword>
<keyword id="KW-0333">Golgi apparatus</keyword>
<keyword id="KW-0493">Microtubule</keyword>
<keyword id="KW-0505">Motor protein</keyword>
<keyword id="KW-0547">Nucleotide-binding</keyword>
<keyword id="KW-0597">Phosphoprotein</keyword>
<keyword id="KW-0653">Protein transport</keyword>
<keyword id="KW-1185">Reference proteome</keyword>
<keyword id="KW-0813">Transport</keyword>
<dbReference type="EMBL" id="BC114026">
    <property type="protein sequence ID" value="AAI14027.1"/>
    <property type="molecule type" value="mRNA"/>
</dbReference>
<dbReference type="RefSeq" id="NP_001039753.1">
    <property type="nucleotide sequence ID" value="NM_001046288.2"/>
</dbReference>
<dbReference type="SMR" id="Q29RT6"/>
<dbReference type="FunCoup" id="Q29RT6">
    <property type="interactions" value="2005"/>
</dbReference>
<dbReference type="STRING" id="9913.ENSBTAP00000011539"/>
<dbReference type="PaxDb" id="9913-ENSBTAP00000011539"/>
<dbReference type="GeneID" id="527854"/>
<dbReference type="KEGG" id="bta:527854"/>
<dbReference type="CTD" id="10112"/>
<dbReference type="VEuPathDB" id="HostDB:ENSBTAG00000008758"/>
<dbReference type="eggNOG" id="KOG0247">
    <property type="taxonomic scope" value="Eukaryota"/>
</dbReference>
<dbReference type="HOGENOM" id="CLU_001485_2_5_1"/>
<dbReference type="InParanoid" id="Q29RT6"/>
<dbReference type="OMA" id="NRHPQKA"/>
<dbReference type="OrthoDB" id="2403182at2759"/>
<dbReference type="TreeFam" id="TF105232"/>
<dbReference type="Reactome" id="R-BTA-2132295">
    <property type="pathway name" value="MHC class II antigen presentation"/>
</dbReference>
<dbReference type="Reactome" id="R-BTA-6811434">
    <property type="pathway name" value="COPI-dependent Golgi-to-ER retrograde traffic"/>
</dbReference>
<dbReference type="Reactome" id="R-BTA-68884">
    <property type="pathway name" value="Mitotic Telophase/Cytokinesis"/>
</dbReference>
<dbReference type="Reactome" id="R-BTA-983189">
    <property type="pathway name" value="Kinesins"/>
</dbReference>
<dbReference type="Proteomes" id="UP000009136">
    <property type="component" value="Chromosome 7"/>
</dbReference>
<dbReference type="Bgee" id="ENSBTAG00000008758">
    <property type="expression patterns" value="Expressed in oocyte and 95 other cell types or tissues"/>
</dbReference>
<dbReference type="GO" id="GO:0005737">
    <property type="term" value="C:cytoplasm"/>
    <property type="evidence" value="ECO:0000318"/>
    <property type="project" value="GO_Central"/>
</dbReference>
<dbReference type="GO" id="GO:0005794">
    <property type="term" value="C:Golgi apparatus"/>
    <property type="evidence" value="ECO:0007669"/>
    <property type="project" value="UniProtKB-SubCell"/>
</dbReference>
<dbReference type="GO" id="GO:0005871">
    <property type="term" value="C:kinesin complex"/>
    <property type="evidence" value="ECO:0000318"/>
    <property type="project" value="GO_Central"/>
</dbReference>
<dbReference type="GO" id="GO:0005874">
    <property type="term" value="C:microtubule"/>
    <property type="evidence" value="ECO:0000318"/>
    <property type="project" value="GO_Central"/>
</dbReference>
<dbReference type="GO" id="GO:0030496">
    <property type="term" value="C:midbody"/>
    <property type="evidence" value="ECO:0000250"/>
    <property type="project" value="UniProtKB"/>
</dbReference>
<dbReference type="GO" id="GO:0005634">
    <property type="term" value="C:nucleus"/>
    <property type="evidence" value="ECO:0000318"/>
    <property type="project" value="GO_Central"/>
</dbReference>
<dbReference type="GO" id="GO:0005819">
    <property type="term" value="C:spindle"/>
    <property type="evidence" value="ECO:0000250"/>
    <property type="project" value="UniProtKB"/>
</dbReference>
<dbReference type="GO" id="GO:0005524">
    <property type="term" value="F:ATP binding"/>
    <property type="evidence" value="ECO:0007669"/>
    <property type="project" value="UniProtKB-KW"/>
</dbReference>
<dbReference type="GO" id="GO:0016887">
    <property type="term" value="F:ATP hydrolysis activity"/>
    <property type="evidence" value="ECO:0000318"/>
    <property type="project" value="GO_Central"/>
</dbReference>
<dbReference type="GO" id="GO:0008017">
    <property type="term" value="F:microtubule binding"/>
    <property type="evidence" value="ECO:0000318"/>
    <property type="project" value="GO_Central"/>
</dbReference>
<dbReference type="GO" id="GO:0003777">
    <property type="term" value="F:microtubule motor activity"/>
    <property type="evidence" value="ECO:0000318"/>
    <property type="project" value="GO_Central"/>
</dbReference>
<dbReference type="GO" id="GO:0001578">
    <property type="term" value="P:microtubule bundle formation"/>
    <property type="evidence" value="ECO:0000250"/>
    <property type="project" value="UniProtKB"/>
</dbReference>
<dbReference type="GO" id="GO:0007018">
    <property type="term" value="P:microtubule-based movement"/>
    <property type="evidence" value="ECO:0000318"/>
    <property type="project" value="GO_Central"/>
</dbReference>
<dbReference type="GO" id="GO:0061952">
    <property type="term" value="P:midbody abscission"/>
    <property type="evidence" value="ECO:0000250"/>
    <property type="project" value="UniProtKB"/>
</dbReference>
<dbReference type="GO" id="GO:0000281">
    <property type="term" value="P:mitotic cytokinesis"/>
    <property type="evidence" value="ECO:0000250"/>
    <property type="project" value="UniProtKB"/>
</dbReference>
<dbReference type="GO" id="GO:0015031">
    <property type="term" value="P:protein transport"/>
    <property type="evidence" value="ECO:0007669"/>
    <property type="project" value="UniProtKB-KW"/>
</dbReference>
<dbReference type="GO" id="GO:0032465">
    <property type="term" value="P:regulation of cytokinesis"/>
    <property type="evidence" value="ECO:0000250"/>
    <property type="project" value="UniProtKB"/>
</dbReference>
<dbReference type="CDD" id="cd01368">
    <property type="entry name" value="KISc_KIF23_like"/>
    <property type="match status" value="1"/>
</dbReference>
<dbReference type="CDD" id="cd21787">
    <property type="entry name" value="RBD_KIF20A"/>
    <property type="match status" value="1"/>
</dbReference>
<dbReference type="FunFam" id="3.40.850.10:FF:000094">
    <property type="entry name" value="Kinesin-like protein"/>
    <property type="match status" value="1"/>
</dbReference>
<dbReference type="FunFam" id="3.40.850.10:FF:000095">
    <property type="entry name" value="Kinesin-like protein"/>
    <property type="match status" value="1"/>
</dbReference>
<dbReference type="Gene3D" id="3.40.850.10">
    <property type="entry name" value="Kinesin motor domain"/>
    <property type="match status" value="1"/>
</dbReference>
<dbReference type="InterPro" id="IPR047149">
    <property type="entry name" value="KIF11-like"/>
</dbReference>
<dbReference type="InterPro" id="IPR019821">
    <property type="entry name" value="Kinesin_motor_CS"/>
</dbReference>
<dbReference type="InterPro" id="IPR001752">
    <property type="entry name" value="Kinesin_motor_dom"/>
</dbReference>
<dbReference type="InterPro" id="IPR036961">
    <property type="entry name" value="Kinesin_motor_dom_sf"/>
</dbReference>
<dbReference type="InterPro" id="IPR027417">
    <property type="entry name" value="P-loop_NTPase"/>
</dbReference>
<dbReference type="PANTHER" id="PTHR47970:SF29">
    <property type="entry name" value="KINESIN FAMILY MEMBER 20B"/>
    <property type="match status" value="1"/>
</dbReference>
<dbReference type="PANTHER" id="PTHR47970">
    <property type="entry name" value="KINESIN-LIKE PROTEIN KIF11"/>
    <property type="match status" value="1"/>
</dbReference>
<dbReference type="Pfam" id="PF00225">
    <property type="entry name" value="Kinesin"/>
    <property type="match status" value="1"/>
</dbReference>
<dbReference type="PRINTS" id="PR00380">
    <property type="entry name" value="KINESINHEAVY"/>
</dbReference>
<dbReference type="SMART" id="SM00129">
    <property type="entry name" value="KISc"/>
    <property type="match status" value="1"/>
</dbReference>
<dbReference type="SUPFAM" id="SSF52540">
    <property type="entry name" value="P-loop containing nucleoside triphosphate hydrolases"/>
    <property type="match status" value="1"/>
</dbReference>
<dbReference type="PROSITE" id="PS00411">
    <property type="entry name" value="KINESIN_MOTOR_1"/>
    <property type="match status" value="1"/>
</dbReference>
<dbReference type="PROSITE" id="PS50067">
    <property type="entry name" value="KINESIN_MOTOR_2"/>
    <property type="match status" value="1"/>
</dbReference>
<feature type="initiator methionine" description="Removed" evidence="2">
    <location>
        <position position="1"/>
    </location>
</feature>
<feature type="chain" id="PRO_0000244376" description="Kinesin-like protein KIF20A">
    <location>
        <begin position="2"/>
        <end position="888"/>
    </location>
</feature>
<feature type="domain" description="Kinesin motor" evidence="4">
    <location>
        <begin position="63"/>
        <end position="506"/>
    </location>
</feature>
<feature type="region of interest" description="Globular" evidence="3">
    <location>
        <begin position="761"/>
        <end position="888"/>
    </location>
</feature>
<feature type="region of interest" description="Disordered" evidence="5">
    <location>
        <begin position="823"/>
        <end position="863"/>
    </location>
</feature>
<feature type="coiled-coil region" evidence="3">
    <location>
        <begin position="559"/>
        <end position="587"/>
    </location>
</feature>
<feature type="coiled-coil region" evidence="3">
    <location>
        <begin position="630"/>
        <end position="760"/>
    </location>
</feature>
<feature type="binding site" evidence="4">
    <location>
        <begin position="159"/>
        <end position="166"/>
    </location>
    <ligand>
        <name>ATP</name>
        <dbReference type="ChEBI" id="CHEBI:30616"/>
    </ligand>
</feature>
<feature type="modified residue" description="N-acetylserine" evidence="2">
    <location>
        <position position="2"/>
    </location>
</feature>
<feature type="modified residue" description="Phosphoserine" evidence="2">
    <location>
        <position position="7"/>
    </location>
</feature>
<feature type="modified residue" description="Phosphoserine" evidence="2">
    <location>
        <position position="14"/>
    </location>
</feature>
<feature type="modified residue" description="Phosphoserine" evidence="2">
    <location>
        <position position="21"/>
    </location>
</feature>
<feature type="modified residue" description="Phosphoserine; by PLK1" evidence="2">
    <location>
        <position position="527"/>
    </location>
</feature>
<feature type="modified residue" description="Phosphoserine" evidence="2">
    <location>
        <position position="531"/>
    </location>
</feature>
<feature type="modified residue" description="Phosphoserine" evidence="2">
    <location>
        <position position="667"/>
    </location>
</feature>
<feature type="modified residue" description="Phosphoserine" evidence="2">
    <location>
        <position position="683"/>
    </location>
</feature>
<feature type="modified residue" description="Phosphoserine" evidence="2">
    <location>
        <position position="823"/>
    </location>
</feature>
<feature type="modified residue" description="Phosphothreonine" evidence="2">
    <location>
        <position position="855"/>
    </location>
</feature>
<feature type="modified residue" description="Phosphoserine" evidence="2">
    <location>
        <position position="865"/>
    </location>
</feature>
<feature type="modified residue" description="Phosphoserine" evidence="2">
    <location>
        <position position="876"/>
    </location>
</feature>
<feature type="modified residue" description="Phosphoserine" evidence="2">
    <location>
        <position position="881"/>
    </location>
</feature>
<reference key="1">
    <citation type="submission" date="2006-02" db="EMBL/GenBank/DDBJ databases">
        <authorList>
            <consortium name="NIH - Mammalian Gene Collection (MGC) project"/>
        </authorList>
    </citation>
    <scope>NUCLEOTIDE SEQUENCE [LARGE SCALE MRNA]</scope>
    <source>
        <strain>Hereford</strain>
        <tissue>Testis</tissue>
    </source>
</reference>
<protein>
    <recommendedName>
        <fullName>Kinesin-like protein KIF20A</fullName>
    </recommendedName>
</protein>
<evidence type="ECO:0000250" key="1"/>
<evidence type="ECO:0000250" key="2">
    <source>
        <dbReference type="UniProtKB" id="O95235"/>
    </source>
</evidence>
<evidence type="ECO:0000255" key="3"/>
<evidence type="ECO:0000255" key="4">
    <source>
        <dbReference type="PROSITE-ProRule" id="PRU00283"/>
    </source>
</evidence>
<evidence type="ECO:0000256" key="5">
    <source>
        <dbReference type="SAM" id="MobiDB-lite"/>
    </source>
</evidence>
<gene>
    <name type="primary">KIF20A</name>
</gene>
<organism>
    <name type="scientific">Bos taurus</name>
    <name type="common">Bovine</name>
    <dbReference type="NCBI Taxonomy" id="9913"/>
    <lineage>
        <taxon>Eukaryota</taxon>
        <taxon>Metazoa</taxon>
        <taxon>Chordata</taxon>
        <taxon>Craniata</taxon>
        <taxon>Vertebrata</taxon>
        <taxon>Euteleostomi</taxon>
        <taxon>Mammalia</taxon>
        <taxon>Eutheria</taxon>
        <taxon>Laurasiatheria</taxon>
        <taxon>Artiodactyla</taxon>
        <taxon>Ruminantia</taxon>
        <taxon>Pecora</taxon>
        <taxon>Bovidae</taxon>
        <taxon>Bovinae</taxon>
        <taxon>Bos</taxon>
    </lineage>
</organism>
<accession>Q29RT6</accession>
<proteinExistence type="evidence at transcript level"/>
<comment type="function">
    <text>Mitotic kinesin required for chromosome passenger complex (CPC)-mediated cytokinesis. Following phosphorylation by PLK1, involved in recruitment of PLK1 to the central spindle. Interacts with guanosine triphosphate (GTP)-bound forms of RAB6A and RAB6B. May act as a motor required for the retrograde RAB6 regulated transport of Golgi membranes and associated vesicles along microtubules. Has a microtubule plus end-directed motility.</text>
</comment>
<comment type="subcellular location">
    <subcellularLocation>
        <location evidence="2">Golgi apparatus</location>
    </subcellularLocation>
    <subcellularLocation>
        <location evidence="2">Cytoplasm</location>
        <location evidence="2">Cytoskeleton</location>
        <location evidence="2">Spindle</location>
    </subcellularLocation>
    <text evidence="2">Localizes to the spindle midzone during anaphase and telophase.</text>
</comment>
<comment type="PTM">
    <text evidence="1">Phosphorylated by PLK1 at Ser-527 during mitosis, creating a docking site for PLK1 and recruiting PLK1 at central spindle.</text>
</comment>
<comment type="similarity">
    <text evidence="4">Belongs to the TRAFAC class myosin-kinesin ATPase superfamily. Kinesin family.</text>
</comment>